<accession>Q10R18</accession>
<accession>A0A0P0VTN2</accession>
<accession>Q0DUP7</accession>
<protein>
    <recommendedName>
        <fullName>Dehydration-responsive element-binding protein 2E</fullName>
        <shortName>OsDREB2E</shortName>
    </recommendedName>
</protein>
<comment type="function">
    <text evidence="1">Probable transcriptional activator that binds to the DNA sequence 5'-[AG]CCGAC-3' of the cis-acting dehydration-responsive element (DRE).</text>
</comment>
<comment type="subcellular location">
    <subcellularLocation>
        <location evidence="5">Nucleus</location>
    </subcellularLocation>
</comment>
<comment type="induction">
    <text evidence="4">Not induced by high-salt and drought stresses.</text>
</comment>
<comment type="similarity">
    <text evidence="5">Belongs to the AP2/ERF transcription factor family. ERF subfamily.</text>
</comment>
<comment type="sequence caution" evidence="5">
    <conflict type="erroneous gene model prediction">
        <sequence resource="EMBL-CDS" id="BAF11041"/>
    </conflict>
</comment>
<dbReference type="EMBL" id="DP000009">
    <property type="protein sequence ID" value="ABF94251.1"/>
    <property type="molecule type" value="Genomic_DNA"/>
</dbReference>
<dbReference type="EMBL" id="AP008209">
    <property type="protein sequence ID" value="BAF11041.2"/>
    <property type="status" value="ALT_SEQ"/>
    <property type="molecule type" value="Genomic_DNA"/>
</dbReference>
<dbReference type="EMBL" id="AP014959">
    <property type="protein sequence ID" value="BAS82564.1"/>
    <property type="molecule type" value="Genomic_DNA"/>
</dbReference>
<dbReference type="SMR" id="Q10R18"/>
<dbReference type="FunCoup" id="Q10R18">
    <property type="interactions" value="1334"/>
</dbReference>
<dbReference type="STRING" id="39947.Q10R18"/>
<dbReference type="PaxDb" id="39947-Q10R18"/>
<dbReference type="EnsemblPlants" id="Os03t0174400-00">
    <property type="protein sequence ID" value="Os03t0174400-00"/>
    <property type="gene ID" value="Os03g0174400"/>
</dbReference>
<dbReference type="Gramene" id="Os03t0174400-00">
    <property type="protein sequence ID" value="Os03t0174400-00"/>
    <property type="gene ID" value="Os03g0174400"/>
</dbReference>
<dbReference type="KEGG" id="dosa:Os03g0174400"/>
<dbReference type="eggNOG" id="ENOG502R56F">
    <property type="taxonomic scope" value="Eukaryota"/>
</dbReference>
<dbReference type="HOGENOM" id="CLU_984879_0_0_1"/>
<dbReference type="InParanoid" id="Q10R18"/>
<dbReference type="OMA" id="AHQRIRW"/>
<dbReference type="OrthoDB" id="550883at2759"/>
<dbReference type="Proteomes" id="UP000000763">
    <property type="component" value="Chromosome 3"/>
</dbReference>
<dbReference type="Proteomes" id="UP000059680">
    <property type="component" value="Chromosome 3"/>
</dbReference>
<dbReference type="GO" id="GO:0005634">
    <property type="term" value="C:nucleus"/>
    <property type="evidence" value="ECO:0000318"/>
    <property type="project" value="GO_Central"/>
</dbReference>
<dbReference type="GO" id="GO:0003700">
    <property type="term" value="F:DNA-binding transcription factor activity"/>
    <property type="evidence" value="ECO:0000318"/>
    <property type="project" value="GO_Central"/>
</dbReference>
<dbReference type="GO" id="GO:0000976">
    <property type="term" value="F:transcription cis-regulatory region binding"/>
    <property type="evidence" value="ECO:0000318"/>
    <property type="project" value="GO_Central"/>
</dbReference>
<dbReference type="GO" id="GO:0045893">
    <property type="term" value="P:positive regulation of DNA-templated transcription"/>
    <property type="evidence" value="ECO:0000318"/>
    <property type="project" value="GO_Central"/>
</dbReference>
<dbReference type="GO" id="GO:0006950">
    <property type="term" value="P:response to stress"/>
    <property type="evidence" value="ECO:0000318"/>
    <property type="project" value="GO_Central"/>
</dbReference>
<dbReference type="CDD" id="cd00018">
    <property type="entry name" value="AP2"/>
    <property type="match status" value="1"/>
</dbReference>
<dbReference type="FunFam" id="3.30.730.10:FF:000001">
    <property type="entry name" value="Ethylene-responsive transcription factor 2"/>
    <property type="match status" value="1"/>
</dbReference>
<dbReference type="Gene3D" id="3.30.730.10">
    <property type="entry name" value="AP2/ERF domain"/>
    <property type="match status" value="1"/>
</dbReference>
<dbReference type="InterPro" id="IPR001471">
    <property type="entry name" value="AP2/ERF_dom"/>
</dbReference>
<dbReference type="InterPro" id="IPR036955">
    <property type="entry name" value="AP2/ERF_dom_sf"/>
</dbReference>
<dbReference type="InterPro" id="IPR016177">
    <property type="entry name" value="DNA-bd_dom_sf"/>
</dbReference>
<dbReference type="PANTHER" id="PTHR31241">
    <property type="entry name" value="DEHYDRATION-RESPONSIVE ELEMENT-BINDING PROTEIN 2C"/>
    <property type="match status" value="1"/>
</dbReference>
<dbReference type="PANTHER" id="PTHR31241:SF2">
    <property type="entry name" value="DEHYDRATION-RESPONSIVE ELEMENT-BINDING PROTEIN 2F"/>
    <property type="match status" value="1"/>
</dbReference>
<dbReference type="Pfam" id="PF00847">
    <property type="entry name" value="AP2"/>
    <property type="match status" value="1"/>
</dbReference>
<dbReference type="PRINTS" id="PR00367">
    <property type="entry name" value="ETHRSPELEMNT"/>
</dbReference>
<dbReference type="SMART" id="SM00380">
    <property type="entry name" value="AP2"/>
    <property type="match status" value="1"/>
</dbReference>
<dbReference type="SUPFAM" id="SSF54171">
    <property type="entry name" value="DNA-binding domain"/>
    <property type="match status" value="1"/>
</dbReference>
<dbReference type="PROSITE" id="PS51032">
    <property type="entry name" value="AP2_ERF"/>
    <property type="match status" value="1"/>
</dbReference>
<sequence>MESYGRKRAWKKGPTRGKGGPQNAACEYRGVRQRTWGKWVAEIREPNKRTRLWLGSFATAEEAALAYDEAARRLYGPDAFLNLPHLRAASAAAAHQRLRWLPASAAAAAARGGAAAVPAYGLLNLNAQHNVHVIHQRLQELKNSSSSPTKPPPRTPTRANPPPPPLPTSSPCSTVTNSVGSAALPPPMSCFQALEQAMAATAAMESAPCDDDAAVVGFGADKPQLDLKEFLQQIGVLKADDDGATGKNGAVHGDDGELADAFGFGGSGEFDWDALAADMSDIAGGHGGALGANGGFQMDDLHEVEQFGGCMPIPIWDI</sequence>
<gene>
    <name type="primary">DREB2E</name>
    <name type="synonym">ERF41</name>
    <name type="ordered locus">Os03g0174400</name>
    <name type="ordered locus">LOC_Os03g07830</name>
</gene>
<proteinExistence type="evidence at transcript level"/>
<name>DRE2E_ORYSJ</name>
<evidence type="ECO:0000250" key="1"/>
<evidence type="ECO:0000255" key="2">
    <source>
        <dbReference type="PROSITE-ProRule" id="PRU00366"/>
    </source>
</evidence>
<evidence type="ECO:0000256" key="3">
    <source>
        <dbReference type="SAM" id="MobiDB-lite"/>
    </source>
</evidence>
<evidence type="ECO:0000269" key="4">
    <source>
    </source>
</evidence>
<evidence type="ECO:0000305" key="5"/>
<keyword id="KW-0010">Activator</keyword>
<keyword id="KW-0238">DNA-binding</keyword>
<keyword id="KW-0539">Nucleus</keyword>
<keyword id="KW-1185">Reference proteome</keyword>
<keyword id="KW-0346">Stress response</keyword>
<keyword id="KW-0804">Transcription</keyword>
<keyword id="KW-0805">Transcription regulation</keyword>
<feature type="chain" id="PRO_0000397871" description="Dehydration-responsive element-binding protein 2E">
    <location>
        <begin position="1"/>
        <end position="318"/>
    </location>
</feature>
<feature type="DNA-binding region" description="AP2/ERF" evidence="2">
    <location>
        <begin position="27"/>
        <end position="84"/>
    </location>
</feature>
<feature type="region of interest" description="Disordered" evidence="3">
    <location>
        <begin position="1"/>
        <end position="24"/>
    </location>
</feature>
<feature type="region of interest" description="Disordered" evidence="3">
    <location>
        <begin position="140"/>
        <end position="178"/>
    </location>
</feature>
<feature type="compositionally biased region" description="Basic residues" evidence="3">
    <location>
        <begin position="1"/>
        <end position="15"/>
    </location>
</feature>
<feature type="compositionally biased region" description="Pro residues" evidence="3">
    <location>
        <begin position="149"/>
        <end position="168"/>
    </location>
</feature>
<reference key="1">
    <citation type="journal article" date="2005" name="Genome Res.">
        <title>Sequence, annotation, and analysis of synteny between rice chromosome 3 and diverged grass species.</title>
        <authorList>
            <consortium name="The rice chromosome 3 sequencing consortium"/>
            <person name="Buell C.R."/>
            <person name="Yuan Q."/>
            <person name="Ouyang S."/>
            <person name="Liu J."/>
            <person name="Zhu W."/>
            <person name="Wang A."/>
            <person name="Maiti R."/>
            <person name="Haas B."/>
            <person name="Wortman J."/>
            <person name="Pertea M."/>
            <person name="Jones K.M."/>
            <person name="Kim M."/>
            <person name="Overton L."/>
            <person name="Tsitrin T."/>
            <person name="Fadrosh D."/>
            <person name="Bera J."/>
            <person name="Weaver B."/>
            <person name="Jin S."/>
            <person name="Johri S."/>
            <person name="Reardon M."/>
            <person name="Webb K."/>
            <person name="Hill J."/>
            <person name="Moffat K."/>
            <person name="Tallon L."/>
            <person name="Van Aken S."/>
            <person name="Lewis M."/>
            <person name="Utterback T."/>
            <person name="Feldblyum T."/>
            <person name="Zismann V."/>
            <person name="Iobst S."/>
            <person name="Hsiao J."/>
            <person name="de Vazeille A.R."/>
            <person name="Salzberg S.L."/>
            <person name="White O."/>
            <person name="Fraser C.M."/>
            <person name="Yu Y."/>
            <person name="Kim H."/>
            <person name="Rambo T."/>
            <person name="Currie J."/>
            <person name="Collura K."/>
            <person name="Kernodle-Thompson S."/>
            <person name="Wei F."/>
            <person name="Kudrna K."/>
            <person name="Ammiraju J.S.S."/>
            <person name="Luo M."/>
            <person name="Goicoechea J.L."/>
            <person name="Wing R.A."/>
            <person name="Henry D."/>
            <person name="Oates R."/>
            <person name="Palmer M."/>
            <person name="Pries G."/>
            <person name="Saski C."/>
            <person name="Simmons J."/>
            <person name="Soderlund C."/>
            <person name="Nelson W."/>
            <person name="de la Bastide M."/>
            <person name="Spiegel L."/>
            <person name="Nascimento L."/>
            <person name="Huang E."/>
            <person name="Preston R."/>
            <person name="Zutavern T."/>
            <person name="Palmer L."/>
            <person name="O'Shaughnessy A."/>
            <person name="Dike S."/>
            <person name="McCombie W.R."/>
            <person name="Minx P."/>
            <person name="Cordum H."/>
            <person name="Wilson R."/>
            <person name="Jin W."/>
            <person name="Lee H.R."/>
            <person name="Jiang J."/>
            <person name="Jackson S."/>
        </authorList>
    </citation>
    <scope>NUCLEOTIDE SEQUENCE [LARGE SCALE GENOMIC DNA]</scope>
    <source>
        <strain>cv. Nipponbare</strain>
    </source>
</reference>
<reference key="2">
    <citation type="journal article" date="2005" name="Nature">
        <title>The map-based sequence of the rice genome.</title>
        <authorList>
            <consortium name="International rice genome sequencing project (IRGSP)"/>
        </authorList>
    </citation>
    <scope>NUCLEOTIDE SEQUENCE [LARGE SCALE GENOMIC DNA]</scope>
    <source>
        <strain>cv. Nipponbare</strain>
    </source>
</reference>
<reference key="3">
    <citation type="journal article" date="2008" name="Nucleic Acids Res.">
        <title>The rice annotation project database (RAP-DB): 2008 update.</title>
        <authorList>
            <consortium name="The rice annotation project (RAP)"/>
        </authorList>
    </citation>
    <scope>GENOME REANNOTATION</scope>
    <source>
        <strain>cv. Nipponbare</strain>
    </source>
</reference>
<reference key="4">
    <citation type="journal article" date="2013" name="Rice">
        <title>Improvement of the Oryza sativa Nipponbare reference genome using next generation sequence and optical map data.</title>
        <authorList>
            <person name="Kawahara Y."/>
            <person name="de la Bastide M."/>
            <person name="Hamilton J.P."/>
            <person name="Kanamori H."/>
            <person name="McCombie W.R."/>
            <person name="Ouyang S."/>
            <person name="Schwartz D.C."/>
            <person name="Tanaka T."/>
            <person name="Wu J."/>
            <person name="Zhou S."/>
            <person name="Childs K.L."/>
            <person name="Davidson R.M."/>
            <person name="Lin H."/>
            <person name="Quesada-Ocampo L."/>
            <person name="Vaillancourt B."/>
            <person name="Sakai H."/>
            <person name="Lee S.S."/>
            <person name="Kim J."/>
            <person name="Numa H."/>
            <person name="Itoh T."/>
            <person name="Buell C.R."/>
            <person name="Matsumoto T."/>
        </authorList>
    </citation>
    <scope>GENOME REANNOTATION</scope>
    <source>
        <strain>cv. Nipponbare</strain>
    </source>
</reference>
<reference key="5">
    <citation type="journal article" date="2010" name="Mol. Genet. Genomics">
        <title>Comprehensive analysis of rice DREB2-type genes that encode transcription factors involved in the expression of abiotic stress-responsive genes.</title>
        <authorList>
            <person name="Matsukura S."/>
            <person name="Mizoi J."/>
            <person name="Yoshida T."/>
            <person name="Todaka D."/>
            <person name="Ito Y."/>
            <person name="Maruyama K."/>
            <person name="Shinozaki K."/>
            <person name="Yamaguchi-Shinozaki K."/>
        </authorList>
    </citation>
    <scope>INDUCTION</scope>
</reference>
<organism>
    <name type="scientific">Oryza sativa subsp. japonica</name>
    <name type="common">Rice</name>
    <dbReference type="NCBI Taxonomy" id="39947"/>
    <lineage>
        <taxon>Eukaryota</taxon>
        <taxon>Viridiplantae</taxon>
        <taxon>Streptophyta</taxon>
        <taxon>Embryophyta</taxon>
        <taxon>Tracheophyta</taxon>
        <taxon>Spermatophyta</taxon>
        <taxon>Magnoliopsida</taxon>
        <taxon>Liliopsida</taxon>
        <taxon>Poales</taxon>
        <taxon>Poaceae</taxon>
        <taxon>BOP clade</taxon>
        <taxon>Oryzoideae</taxon>
        <taxon>Oryzeae</taxon>
        <taxon>Oryzinae</taxon>
        <taxon>Oryza</taxon>
        <taxon>Oryza sativa</taxon>
    </lineage>
</organism>